<name>PBCE_EMENI</name>
<organism>
    <name type="scientific">Emericella nidulans (strain FGSC A4 / ATCC 38163 / CBS 112.46 / NRRL 194 / M139)</name>
    <name type="common">Aspergillus nidulans</name>
    <dbReference type="NCBI Taxonomy" id="227321"/>
    <lineage>
        <taxon>Eukaryota</taxon>
        <taxon>Fungi</taxon>
        <taxon>Dikarya</taxon>
        <taxon>Ascomycota</taxon>
        <taxon>Pezizomycotina</taxon>
        <taxon>Eurotiomycetes</taxon>
        <taxon>Eurotiomycetidae</taxon>
        <taxon>Eurotiales</taxon>
        <taxon>Aspergillaceae</taxon>
        <taxon>Aspergillus</taxon>
        <taxon>Aspergillus subgen. Nidulantes</taxon>
    </lineage>
</organism>
<comment type="function">
    <text evidence="1 2 5">Oxidoreductase; part of the gene cluster that mediates the biosynthesis of the diterpene ent-pimara-8(14),15-diene (PD) (PubMed:22506079, PubMed:27098256). Within the cluster, the HMG-CoA reductase AN1593 functions in the mevalonate pathway, which produces isoprenoid precursors (PubMed:22506079, PubMed:27098256). The geranylgeranyl pyrophosphate (GGPP) synthase AN1592 is needed in the formation of GGPP, the precursor for diterpenes (PubMed:22506079, PubMed:27098256). Lastly, the pimaradiene synthase pbcA performs the 2 cyclization steps that convert GGPP to ent-pimara-8(14),15-diene (PubMed:22506079, PubMed:27098256). The putative roles of the remaining cluster enzymes in ent-pimara-8(14),15-diene biosynthesis is unclear (Probable). The cytochrome P450 monooxygenase AN1598, the glutathione S-transferase AN1595, the oxidoreductases AN1596 and AN1597 probably function as decorative enzymes (Probable). It is possible that in biological conditions the compound is oxidized to ent-pimara-8(14),15-dien-19-oic acid, which is a bioactive diterpene compound predominant in many plant extracts (Probable).</text>
</comment>
<comment type="pathway">
    <text evidence="5">Secondary metabolite biosynthesis; terpenoid biosynthesis.</text>
</comment>
<comment type="induction">
    <text evidence="1">Expression is positively regulated by the cluster-specific transcription factor pbcR.</text>
</comment>
<comment type="similarity">
    <text evidence="4">Belongs to the NmrA-type oxidoreductase family.</text>
</comment>
<gene>
    <name type="ORF">AN1596</name>
    <name type="ORF">ANIA_01596</name>
</gene>
<evidence type="ECO:0000269" key="1">
    <source>
    </source>
</evidence>
<evidence type="ECO:0000269" key="2">
    <source>
    </source>
</evidence>
<evidence type="ECO:0000303" key="3">
    <source>
    </source>
</evidence>
<evidence type="ECO:0000305" key="4"/>
<evidence type="ECO:0000305" key="5">
    <source>
    </source>
</evidence>
<reference key="1">
    <citation type="journal article" date="2005" name="Nature">
        <title>Sequencing of Aspergillus nidulans and comparative analysis with A. fumigatus and A. oryzae.</title>
        <authorList>
            <person name="Galagan J.E."/>
            <person name="Calvo S.E."/>
            <person name="Cuomo C."/>
            <person name="Ma L.-J."/>
            <person name="Wortman J.R."/>
            <person name="Batzoglou S."/>
            <person name="Lee S.-I."/>
            <person name="Bastuerkmen M."/>
            <person name="Spevak C.C."/>
            <person name="Clutterbuck J."/>
            <person name="Kapitonov V."/>
            <person name="Jurka J."/>
            <person name="Scazzocchio C."/>
            <person name="Farman M.L."/>
            <person name="Butler J."/>
            <person name="Purcell S."/>
            <person name="Harris S."/>
            <person name="Braus G.H."/>
            <person name="Draht O."/>
            <person name="Busch S."/>
            <person name="D'Enfert C."/>
            <person name="Bouchier C."/>
            <person name="Goldman G.H."/>
            <person name="Bell-Pedersen D."/>
            <person name="Griffiths-Jones S."/>
            <person name="Doonan J.H."/>
            <person name="Yu J."/>
            <person name="Vienken K."/>
            <person name="Pain A."/>
            <person name="Freitag M."/>
            <person name="Selker E.U."/>
            <person name="Archer D.B."/>
            <person name="Penalva M.A."/>
            <person name="Oakley B.R."/>
            <person name="Momany M."/>
            <person name="Tanaka T."/>
            <person name="Kumagai T."/>
            <person name="Asai K."/>
            <person name="Machida M."/>
            <person name="Nierman W.C."/>
            <person name="Denning D.W."/>
            <person name="Caddick M.X."/>
            <person name="Hynes M."/>
            <person name="Paoletti M."/>
            <person name="Fischer R."/>
            <person name="Miller B.L."/>
            <person name="Dyer P.S."/>
            <person name="Sachs M.S."/>
            <person name="Osmani S.A."/>
            <person name="Birren B.W."/>
        </authorList>
    </citation>
    <scope>NUCLEOTIDE SEQUENCE [LARGE SCALE GENOMIC DNA]</scope>
    <source>
        <strain>FGSC A4 / ATCC 38163 / CBS 112.46 / NRRL 194 / M139</strain>
    </source>
</reference>
<reference key="2">
    <citation type="journal article" date="2009" name="Fungal Genet. Biol.">
        <title>The 2008 update of the Aspergillus nidulans genome annotation: a community effort.</title>
        <authorList>
            <person name="Wortman J.R."/>
            <person name="Gilsenan J.M."/>
            <person name="Joardar V."/>
            <person name="Deegan J."/>
            <person name="Clutterbuck J."/>
            <person name="Andersen M.R."/>
            <person name="Archer D."/>
            <person name="Bencina M."/>
            <person name="Braus G."/>
            <person name="Coutinho P."/>
            <person name="von Dohren H."/>
            <person name="Doonan J."/>
            <person name="Driessen A.J."/>
            <person name="Durek P."/>
            <person name="Espeso E."/>
            <person name="Fekete E."/>
            <person name="Flipphi M."/>
            <person name="Estrada C.G."/>
            <person name="Geysens S."/>
            <person name="Goldman G."/>
            <person name="de Groot P.W."/>
            <person name="Hansen K."/>
            <person name="Harris S.D."/>
            <person name="Heinekamp T."/>
            <person name="Helmstaedt K."/>
            <person name="Henrissat B."/>
            <person name="Hofmann G."/>
            <person name="Homan T."/>
            <person name="Horio T."/>
            <person name="Horiuchi H."/>
            <person name="James S."/>
            <person name="Jones M."/>
            <person name="Karaffa L."/>
            <person name="Karanyi Z."/>
            <person name="Kato M."/>
            <person name="Keller N."/>
            <person name="Kelly D.E."/>
            <person name="Kiel J.A."/>
            <person name="Kim J.M."/>
            <person name="van der Klei I.J."/>
            <person name="Klis F.M."/>
            <person name="Kovalchuk A."/>
            <person name="Krasevec N."/>
            <person name="Kubicek C.P."/>
            <person name="Liu B."/>
            <person name="Maccabe A."/>
            <person name="Meyer V."/>
            <person name="Mirabito P."/>
            <person name="Miskei M."/>
            <person name="Mos M."/>
            <person name="Mullins J."/>
            <person name="Nelson D.R."/>
            <person name="Nielsen J."/>
            <person name="Oakley B.R."/>
            <person name="Osmani S.A."/>
            <person name="Pakula T."/>
            <person name="Paszewski A."/>
            <person name="Paulsen I."/>
            <person name="Pilsyk S."/>
            <person name="Pocsi I."/>
            <person name="Punt P.J."/>
            <person name="Ram A.F."/>
            <person name="Ren Q."/>
            <person name="Robellet X."/>
            <person name="Robson G."/>
            <person name="Seiboth B."/>
            <person name="van Solingen P."/>
            <person name="Specht T."/>
            <person name="Sun J."/>
            <person name="Taheri-Talesh N."/>
            <person name="Takeshita N."/>
            <person name="Ussery D."/>
            <person name="vanKuyk P.A."/>
            <person name="Visser H."/>
            <person name="van de Vondervoort P.J."/>
            <person name="de Vries R.P."/>
            <person name="Walton J."/>
            <person name="Xiang X."/>
            <person name="Xiong Y."/>
            <person name="Zeng A.P."/>
            <person name="Brandt B.W."/>
            <person name="Cornell M.J."/>
            <person name="van den Hondel C.A."/>
            <person name="Visser J."/>
            <person name="Oliver S.G."/>
            <person name="Turner G."/>
        </authorList>
    </citation>
    <scope>GENOME REANNOTATION</scope>
    <source>
        <strain>FGSC A4 / ATCC 38163 / CBS 112.46 / NRRL 194 / M139</strain>
    </source>
</reference>
<reference key="3">
    <citation type="journal article" date="2012" name="PLoS ONE">
        <title>Identification and characterization of a novel diterpene gene cluster in Aspergillus nidulans.</title>
        <authorList>
            <person name="Bromann K."/>
            <person name="Toivari M."/>
            <person name="Viljanen K."/>
            <person name="Vuoristo A."/>
            <person name="Ruohonen L."/>
            <person name="Nakari-Setaelae T."/>
        </authorList>
    </citation>
    <scope>FUNCTION</scope>
    <scope>INDUCTION</scope>
    <scope>PATHWAY</scope>
</reference>
<reference key="4">
    <citation type="journal article" date="2016" name="Appl. Microbiol. Biotechnol.">
        <title>Engineering Aspergillus nidulans for heterologous ent-kaurene and gamma-terpinene production.</title>
        <authorList>
            <person name="Bromann K."/>
            <person name="Toivari M."/>
            <person name="Viljanen K."/>
            <person name="Ruohonen L."/>
            <person name="Nakari-Setaelae T."/>
        </authorList>
    </citation>
    <scope>FUNCTION</scope>
</reference>
<dbReference type="EC" id="1.-.-.-" evidence="5"/>
<dbReference type="EMBL" id="AACD01000025">
    <property type="protein sequence ID" value="EAA64303.1"/>
    <property type="molecule type" value="Genomic_DNA"/>
</dbReference>
<dbReference type="EMBL" id="BN001307">
    <property type="protein sequence ID" value="CBF85184.1"/>
    <property type="molecule type" value="Genomic_DNA"/>
</dbReference>
<dbReference type="RefSeq" id="XP_659200.1">
    <property type="nucleotide sequence ID" value="XM_654108.1"/>
</dbReference>
<dbReference type="SMR" id="A0A1U8QP15"/>
<dbReference type="FunCoup" id="A0A1U8QP15">
    <property type="interactions" value="26"/>
</dbReference>
<dbReference type="EnsemblFungi" id="CBF85184">
    <property type="protein sequence ID" value="CBF85184"/>
    <property type="gene ID" value="ANIA_01596"/>
</dbReference>
<dbReference type="GeneID" id="2874630"/>
<dbReference type="KEGG" id="ani:ANIA_01596"/>
<dbReference type="VEuPathDB" id="FungiDB:AN1596"/>
<dbReference type="eggNOG" id="KOG1208">
    <property type="taxonomic scope" value="Eukaryota"/>
</dbReference>
<dbReference type="HOGENOM" id="CLU_044999_0_0_1"/>
<dbReference type="InParanoid" id="A0A1U8QP15"/>
<dbReference type="OMA" id="YAELPFY"/>
<dbReference type="OrthoDB" id="2898509at2759"/>
<dbReference type="UniPathway" id="UPA00213"/>
<dbReference type="Proteomes" id="UP000000560">
    <property type="component" value="Chromosome VII"/>
</dbReference>
<dbReference type="GO" id="GO:0016491">
    <property type="term" value="F:oxidoreductase activity"/>
    <property type="evidence" value="ECO:0007669"/>
    <property type="project" value="UniProtKB-KW"/>
</dbReference>
<dbReference type="GO" id="GO:0016114">
    <property type="term" value="P:terpenoid biosynthetic process"/>
    <property type="evidence" value="ECO:0007669"/>
    <property type="project" value="UniProtKB-UniPathway"/>
</dbReference>
<dbReference type="FunFam" id="3.40.50.720:FF:000637">
    <property type="entry name" value="Uncharacterized oxidoreductase C736.13"/>
    <property type="match status" value="1"/>
</dbReference>
<dbReference type="Gene3D" id="3.40.50.720">
    <property type="entry name" value="NAD(P)-binding Rossmann-like Domain"/>
    <property type="match status" value="1"/>
</dbReference>
<dbReference type="InterPro" id="IPR036291">
    <property type="entry name" value="NAD(P)-bd_dom_sf"/>
</dbReference>
<dbReference type="InterPro" id="IPR002347">
    <property type="entry name" value="SDR_fam"/>
</dbReference>
<dbReference type="InterPro" id="IPR052228">
    <property type="entry name" value="Sec_Metab_Biosynth_Oxidored"/>
</dbReference>
<dbReference type="PANTHER" id="PTHR47534:SF2">
    <property type="entry name" value="KETOREDUCTASE (KR) DOMAIN-CONTAINING PROTEIN-RELATED"/>
    <property type="match status" value="1"/>
</dbReference>
<dbReference type="PANTHER" id="PTHR47534">
    <property type="entry name" value="YALI0E05731P"/>
    <property type="match status" value="1"/>
</dbReference>
<dbReference type="Pfam" id="PF00106">
    <property type="entry name" value="adh_short"/>
    <property type="match status" value="1"/>
</dbReference>
<dbReference type="SUPFAM" id="SSF51735">
    <property type="entry name" value="NAD(P)-binding Rossmann-fold domains"/>
    <property type="match status" value="1"/>
</dbReference>
<keyword id="KW-0560">Oxidoreductase</keyword>
<keyword id="KW-1185">Reference proteome</keyword>
<protein>
    <recommendedName>
        <fullName evidence="3">Oxidoreductase AN1596</fullName>
        <ecNumber evidence="5">1.-.-.-</ecNumber>
    </recommendedName>
    <alternativeName>
        <fullName evidence="3">Pimaradiene biosynthesis cluster protein AN1596</fullName>
    </alternativeName>
</protein>
<accession>A0A1U8QP15</accession>
<accession>C8VN89</accession>
<accession>Q5BCY4</accession>
<sequence>MVSLKTVQASNAGLRALPNITALFVGGTSGIGQSTLRQLARYADSPTAYIIGRNEARTRPFLSELQQLNPKGRFHFIEADVSLVRNVDAACQQILQQQKKLNFLFMTPGGISLGGRNETVEGIDYLFALRYYSRMRFIQNLLPLLEASSPSRVISVYGGGFEYSINTADLDLKHNFSLLNAYKHSITMTSLSMEHLARTHPAVSFIHVYPGLVGTNIYTNSFPAPVSTFYNYLVWPFMKPFSVDLGESGERHLFHLSSAHYPAKQGIVPQGVPLEAGEVAKGITGEPGSGAYLLNWKGDVRPSTKILAQYREQKIPQLVWDHTESLMDQAVHR</sequence>
<feature type="chain" id="PRO_0000450843" description="Oxidoreductase AN1596">
    <location>
        <begin position="1"/>
        <end position="333"/>
    </location>
</feature>
<proteinExistence type="evidence at transcript level"/>